<evidence type="ECO:0000255" key="1">
    <source>
        <dbReference type="HAMAP-Rule" id="MF_00417"/>
    </source>
</evidence>
<gene>
    <name evidence="1" type="primary">pcp</name>
    <name type="ordered locus">BCQ_2901</name>
</gene>
<accession>B9J587</accession>
<dbReference type="EC" id="3.4.19.3" evidence="1"/>
<dbReference type="EMBL" id="CP000227">
    <property type="protein sequence ID" value="ACM13329.1"/>
    <property type="molecule type" value="Genomic_DNA"/>
</dbReference>
<dbReference type="SMR" id="B9J587"/>
<dbReference type="MEROPS" id="C15.001"/>
<dbReference type="KEGG" id="bcq:BCQ_2901"/>
<dbReference type="HOGENOM" id="CLU_043960_4_0_9"/>
<dbReference type="Proteomes" id="UP000000441">
    <property type="component" value="Chromosome"/>
</dbReference>
<dbReference type="GO" id="GO:0005829">
    <property type="term" value="C:cytosol"/>
    <property type="evidence" value="ECO:0007669"/>
    <property type="project" value="InterPro"/>
</dbReference>
<dbReference type="GO" id="GO:0016920">
    <property type="term" value="F:pyroglutamyl-peptidase activity"/>
    <property type="evidence" value="ECO:0007669"/>
    <property type="project" value="UniProtKB-UniRule"/>
</dbReference>
<dbReference type="GO" id="GO:0006508">
    <property type="term" value="P:proteolysis"/>
    <property type="evidence" value="ECO:0007669"/>
    <property type="project" value="UniProtKB-KW"/>
</dbReference>
<dbReference type="CDD" id="cd00501">
    <property type="entry name" value="Peptidase_C15"/>
    <property type="match status" value="1"/>
</dbReference>
<dbReference type="FunFam" id="3.40.630.20:FF:000001">
    <property type="entry name" value="Pyrrolidone-carboxylate peptidase"/>
    <property type="match status" value="1"/>
</dbReference>
<dbReference type="Gene3D" id="3.40.630.20">
    <property type="entry name" value="Peptidase C15, pyroglutamyl peptidase I-like"/>
    <property type="match status" value="1"/>
</dbReference>
<dbReference type="HAMAP" id="MF_00417">
    <property type="entry name" value="Pyrrolid_peptidase"/>
    <property type="match status" value="1"/>
</dbReference>
<dbReference type="InterPro" id="IPR000816">
    <property type="entry name" value="Peptidase_C15"/>
</dbReference>
<dbReference type="InterPro" id="IPR016125">
    <property type="entry name" value="Peptidase_C15-like"/>
</dbReference>
<dbReference type="InterPro" id="IPR036440">
    <property type="entry name" value="Peptidase_C15-like_sf"/>
</dbReference>
<dbReference type="InterPro" id="IPR029762">
    <property type="entry name" value="PGP-I_bact-type"/>
</dbReference>
<dbReference type="InterPro" id="IPR033694">
    <property type="entry name" value="PGPEP1_Cys_AS"/>
</dbReference>
<dbReference type="InterPro" id="IPR033693">
    <property type="entry name" value="PGPEP1_Glu_AS"/>
</dbReference>
<dbReference type="NCBIfam" id="NF009676">
    <property type="entry name" value="PRK13197.1"/>
    <property type="match status" value="1"/>
</dbReference>
<dbReference type="NCBIfam" id="TIGR00504">
    <property type="entry name" value="pyro_pdase"/>
    <property type="match status" value="1"/>
</dbReference>
<dbReference type="PANTHER" id="PTHR23402">
    <property type="entry name" value="PROTEASE FAMILY C15 PYROGLUTAMYL-PEPTIDASE I-RELATED"/>
    <property type="match status" value="1"/>
</dbReference>
<dbReference type="PANTHER" id="PTHR23402:SF1">
    <property type="entry name" value="PYROGLUTAMYL-PEPTIDASE I"/>
    <property type="match status" value="1"/>
</dbReference>
<dbReference type="Pfam" id="PF01470">
    <property type="entry name" value="Peptidase_C15"/>
    <property type="match status" value="1"/>
</dbReference>
<dbReference type="PIRSF" id="PIRSF015592">
    <property type="entry name" value="Prld-crbxl_pptds"/>
    <property type="match status" value="1"/>
</dbReference>
<dbReference type="PRINTS" id="PR00706">
    <property type="entry name" value="PYROGLUPTASE"/>
</dbReference>
<dbReference type="SUPFAM" id="SSF53182">
    <property type="entry name" value="Pyrrolidone carboxyl peptidase (pyroglutamate aminopeptidase)"/>
    <property type="match status" value="1"/>
</dbReference>
<dbReference type="PROSITE" id="PS01334">
    <property type="entry name" value="PYRASE_CYS"/>
    <property type="match status" value="1"/>
</dbReference>
<dbReference type="PROSITE" id="PS01333">
    <property type="entry name" value="PYRASE_GLU"/>
    <property type="match status" value="1"/>
</dbReference>
<name>PCP_BACCQ</name>
<comment type="function">
    <text evidence="1">Removes 5-oxoproline from various penultimate amino acid residues except L-proline.</text>
</comment>
<comment type="catalytic activity">
    <reaction evidence="1">
        <text>Release of an N-terminal pyroglutamyl group from a polypeptide, the second amino acid generally not being Pro.</text>
        <dbReference type="EC" id="3.4.19.3"/>
    </reaction>
</comment>
<comment type="subunit">
    <text evidence="1">Homotetramer.</text>
</comment>
<comment type="subcellular location">
    <subcellularLocation>
        <location evidence="1">Cytoplasm</location>
    </subcellularLocation>
</comment>
<comment type="similarity">
    <text evidence="1">Belongs to the peptidase C15 family.</text>
</comment>
<organism>
    <name type="scientific">Bacillus cereus (strain Q1)</name>
    <dbReference type="NCBI Taxonomy" id="361100"/>
    <lineage>
        <taxon>Bacteria</taxon>
        <taxon>Bacillati</taxon>
        <taxon>Bacillota</taxon>
        <taxon>Bacilli</taxon>
        <taxon>Bacillales</taxon>
        <taxon>Bacillaceae</taxon>
        <taxon>Bacillus</taxon>
        <taxon>Bacillus cereus group</taxon>
    </lineage>
</organism>
<protein>
    <recommendedName>
        <fullName evidence="1">Pyrrolidone-carboxylate peptidase</fullName>
        <ecNumber evidence="1">3.4.19.3</ecNumber>
    </recommendedName>
    <alternativeName>
        <fullName evidence="1">5-oxoprolyl-peptidase</fullName>
    </alternativeName>
    <alternativeName>
        <fullName evidence="1">Pyroglutamyl-peptidase I</fullName>
        <shortName evidence="1">PGP-I</shortName>
        <shortName evidence="1">Pyrase</shortName>
    </alternativeName>
</protein>
<reference key="1">
    <citation type="journal article" date="2009" name="J. Bacteriol.">
        <title>Complete genome sequence of the extremophilic Bacillus cereus strain Q1 with industrial applications.</title>
        <authorList>
            <person name="Xiong Z."/>
            <person name="Jiang Y."/>
            <person name="Qi D."/>
            <person name="Lu H."/>
            <person name="Yang F."/>
            <person name="Yang J."/>
            <person name="Chen L."/>
            <person name="Sun L."/>
            <person name="Xu X."/>
            <person name="Xue Y."/>
            <person name="Zhu Y."/>
            <person name="Jin Q."/>
        </authorList>
    </citation>
    <scope>NUCLEOTIDE SEQUENCE [LARGE SCALE GENOMIC DNA]</scope>
    <source>
        <strain>Q1</strain>
    </source>
</reference>
<keyword id="KW-0963">Cytoplasm</keyword>
<keyword id="KW-0378">Hydrolase</keyword>
<keyword id="KW-0645">Protease</keyword>
<keyword id="KW-0788">Thiol protease</keyword>
<sequence length="215" mass="23463">MKTVLLTGFDPFGGESINPAWEVAKSLHEKTIGEYKIISKQVPTVFHKSISVLKEYIEELAPEFIICIGQAGGRPDITIERVAINIDDARIADNEGNQPVDVPVVEEGPAAYWSTLPMKAIVKRLQAEGIPASVSQTAGTFVCNHLFYGLMHELEKQNHKVKGGFVHIPFLPEQASNYPGQPSMSLSTIRKGIELAVEVTTTVEVDIVEVGGTTH</sequence>
<proteinExistence type="inferred from homology"/>
<feature type="chain" id="PRO_1000192220" description="Pyrrolidone-carboxylate peptidase">
    <location>
        <begin position="1"/>
        <end position="215"/>
    </location>
</feature>
<feature type="active site" evidence="1">
    <location>
        <position position="80"/>
    </location>
</feature>
<feature type="active site" evidence="1">
    <location>
        <position position="143"/>
    </location>
</feature>
<feature type="active site" evidence="1">
    <location>
        <position position="167"/>
    </location>
</feature>